<keyword id="KW-0460">Magnesium</keyword>
<keyword id="KW-0464">Manganese</keyword>
<keyword id="KW-0474">Menaquinone biosynthesis</keyword>
<keyword id="KW-0479">Metal-binding</keyword>
<keyword id="KW-0786">Thiamine pyrophosphate</keyword>
<keyword id="KW-0808">Transferase</keyword>
<dbReference type="EC" id="2.2.1.9" evidence="1"/>
<dbReference type="EMBL" id="CP000474">
    <property type="protein sequence ID" value="ABM09847.1"/>
    <property type="molecule type" value="Genomic_DNA"/>
</dbReference>
<dbReference type="RefSeq" id="WP_011775743.1">
    <property type="nucleotide sequence ID" value="NC_008711.1"/>
</dbReference>
<dbReference type="SMR" id="A1R996"/>
<dbReference type="STRING" id="290340.AAur_3107"/>
<dbReference type="KEGG" id="aau:AAur_3107"/>
<dbReference type="eggNOG" id="COG1165">
    <property type="taxonomic scope" value="Bacteria"/>
</dbReference>
<dbReference type="HOGENOM" id="CLU_006051_4_0_11"/>
<dbReference type="OrthoDB" id="9791859at2"/>
<dbReference type="UniPathway" id="UPA00079"/>
<dbReference type="UniPathway" id="UPA01057">
    <property type="reaction ID" value="UER00164"/>
</dbReference>
<dbReference type="Proteomes" id="UP000000637">
    <property type="component" value="Chromosome"/>
</dbReference>
<dbReference type="GO" id="GO:0070204">
    <property type="term" value="F:2-succinyl-5-enolpyruvyl-6-hydroxy-3-cyclohexene-1-carboxylic-acid synthase activity"/>
    <property type="evidence" value="ECO:0007669"/>
    <property type="project" value="UniProtKB-UniRule"/>
</dbReference>
<dbReference type="GO" id="GO:0000287">
    <property type="term" value="F:magnesium ion binding"/>
    <property type="evidence" value="ECO:0007669"/>
    <property type="project" value="UniProtKB-UniRule"/>
</dbReference>
<dbReference type="GO" id="GO:0030145">
    <property type="term" value="F:manganese ion binding"/>
    <property type="evidence" value="ECO:0007669"/>
    <property type="project" value="UniProtKB-UniRule"/>
</dbReference>
<dbReference type="GO" id="GO:0030976">
    <property type="term" value="F:thiamine pyrophosphate binding"/>
    <property type="evidence" value="ECO:0007669"/>
    <property type="project" value="UniProtKB-UniRule"/>
</dbReference>
<dbReference type="GO" id="GO:0009234">
    <property type="term" value="P:menaquinone biosynthetic process"/>
    <property type="evidence" value="ECO:0007669"/>
    <property type="project" value="UniProtKB-UniRule"/>
</dbReference>
<dbReference type="CDD" id="cd07037">
    <property type="entry name" value="TPP_PYR_MenD"/>
    <property type="match status" value="1"/>
</dbReference>
<dbReference type="CDD" id="cd02009">
    <property type="entry name" value="TPP_SHCHC_synthase"/>
    <property type="match status" value="1"/>
</dbReference>
<dbReference type="Gene3D" id="3.40.50.970">
    <property type="match status" value="2"/>
</dbReference>
<dbReference type="Gene3D" id="3.40.50.1220">
    <property type="entry name" value="TPP-binding domain"/>
    <property type="match status" value="1"/>
</dbReference>
<dbReference type="HAMAP" id="MF_01659">
    <property type="entry name" value="MenD"/>
    <property type="match status" value="1"/>
</dbReference>
<dbReference type="InterPro" id="IPR004433">
    <property type="entry name" value="MenaQ_synth_MenD"/>
</dbReference>
<dbReference type="InterPro" id="IPR029061">
    <property type="entry name" value="THDP-binding"/>
</dbReference>
<dbReference type="InterPro" id="IPR012001">
    <property type="entry name" value="Thiamin_PyroP_enz_TPP-bd_dom"/>
</dbReference>
<dbReference type="InterPro" id="IPR011766">
    <property type="entry name" value="TPP_enzyme_TPP-bd"/>
</dbReference>
<dbReference type="NCBIfam" id="TIGR00173">
    <property type="entry name" value="menD"/>
    <property type="match status" value="1"/>
</dbReference>
<dbReference type="PANTHER" id="PTHR42916">
    <property type="entry name" value="2-SUCCINYL-5-ENOLPYRUVYL-6-HYDROXY-3-CYCLOHEXENE-1-CARBOXYLATE SYNTHASE"/>
    <property type="match status" value="1"/>
</dbReference>
<dbReference type="PANTHER" id="PTHR42916:SF1">
    <property type="entry name" value="PROTEIN PHYLLO, CHLOROPLASTIC"/>
    <property type="match status" value="1"/>
</dbReference>
<dbReference type="Pfam" id="PF02775">
    <property type="entry name" value="TPP_enzyme_C"/>
    <property type="match status" value="1"/>
</dbReference>
<dbReference type="Pfam" id="PF02776">
    <property type="entry name" value="TPP_enzyme_N"/>
    <property type="match status" value="1"/>
</dbReference>
<dbReference type="PIRSF" id="PIRSF004983">
    <property type="entry name" value="MenD"/>
    <property type="match status" value="1"/>
</dbReference>
<dbReference type="SUPFAM" id="SSF52518">
    <property type="entry name" value="Thiamin diphosphate-binding fold (THDP-binding)"/>
    <property type="match status" value="2"/>
</dbReference>
<proteinExistence type="inferred from homology"/>
<reference key="1">
    <citation type="journal article" date="2006" name="PLoS Genet.">
        <title>Secrets of soil survival revealed by the genome sequence of Arthrobacter aurescens TC1.</title>
        <authorList>
            <person name="Mongodin E.F."/>
            <person name="Shapir N."/>
            <person name="Daugherty S.C."/>
            <person name="DeBoy R.T."/>
            <person name="Emerson J.B."/>
            <person name="Shvartzbeyn A."/>
            <person name="Radune D."/>
            <person name="Vamathevan J."/>
            <person name="Riggs F."/>
            <person name="Grinberg V."/>
            <person name="Khouri H.M."/>
            <person name="Wackett L.P."/>
            <person name="Nelson K.E."/>
            <person name="Sadowsky M.J."/>
        </authorList>
    </citation>
    <scope>NUCLEOTIDE SEQUENCE [LARGE SCALE GENOMIC DNA]</scope>
    <source>
        <strain>TC1</strain>
    </source>
</reference>
<sequence>MTSQDSLTSIGAARIAVTALLDGGVRHVVVAPGSRSAPMAYALAEAEAAGRVRLHVRIDERDAGFTALGLALSTEAPVAVVTTSGTAVGNLLPAVMEANHSAVPVVVISADRPEELHGTGANQTTIQLDLFGDHVRFAVDVPAGDHPQKAVATALYAATGALEDTPPGPVQVNLAFRDPLVPADGDALPAAAGHGVFHYDAGPQALNLPAASGELAERRTVVLAGHDAGPVAEAFARAHGLPLLAEPSSNARFGRNAVGPYRVLLAHFGPDSPTPIERVVLFGRATLSRPVASLLARESVVSAIYQPVPVAWYEEGRRRETPIETLPELADFAGRGSAEWLDSWLLAGAAAQHGLDGVLAGEDLANGPSVGATVWEHSRGQLVLGSSNGIRDVDLAGQPHPEPIATVYANRGLAGIDGTIATATGIALGSGRETTVLLGDVTFLHDAGGLLLGHGEPVPDLRIVVLNDSGGAIFSLLEHGAVEDSGAYGTAVERLFGTPHSVGIGALAAAYGVGHQTVSTTAELAAALKSPLKGRTIVEVRVDRSGLRALHARIKEAVSAAVGQVLTAG</sequence>
<protein>
    <recommendedName>
        <fullName evidence="1">2-succinyl-5-enolpyruvyl-6-hydroxy-3-cyclohexene-1-carboxylate synthase</fullName>
        <shortName evidence="1">SEPHCHC synthase</shortName>
        <ecNumber evidence="1">2.2.1.9</ecNumber>
    </recommendedName>
    <alternativeName>
        <fullName evidence="1">Menaquinone biosynthesis protein MenD</fullName>
    </alternativeName>
</protein>
<evidence type="ECO:0000255" key="1">
    <source>
        <dbReference type="HAMAP-Rule" id="MF_01659"/>
    </source>
</evidence>
<gene>
    <name evidence="1" type="primary">menD</name>
    <name type="ordered locus">AAur_3107</name>
</gene>
<feature type="chain" id="PRO_0000341701" description="2-succinyl-5-enolpyruvyl-6-hydroxy-3-cyclohexene-1-carboxylate synthase">
    <location>
        <begin position="1"/>
        <end position="569"/>
    </location>
</feature>
<comment type="function">
    <text evidence="1">Catalyzes the thiamine diphosphate-dependent decarboxylation of 2-oxoglutarate and the subsequent addition of the resulting succinic semialdehyde-thiamine pyrophosphate anion to isochorismate to yield 2-succinyl-5-enolpyruvyl-6-hydroxy-3-cyclohexene-1-carboxylate (SEPHCHC).</text>
</comment>
<comment type="catalytic activity">
    <reaction evidence="1">
        <text>isochorismate + 2-oxoglutarate + H(+) = 5-enolpyruvoyl-6-hydroxy-2-succinyl-cyclohex-3-ene-1-carboxylate + CO2</text>
        <dbReference type="Rhea" id="RHEA:25593"/>
        <dbReference type="ChEBI" id="CHEBI:15378"/>
        <dbReference type="ChEBI" id="CHEBI:16526"/>
        <dbReference type="ChEBI" id="CHEBI:16810"/>
        <dbReference type="ChEBI" id="CHEBI:29780"/>
        <dbReference type="ChEBI" id="CHEBI:58818"/>
        <dbReference type="EC" id="2.2.1.9"/>
    </reaction>
</comment>
<comment type="cofactor">
    <cofactor evidence="1">
        <name>Mg(2+)</name>
        <dbReference type="ChEBI" id="CHEBI:18420"/>
    </cofactor>
    <cofactor evidence="1">
        <name>Mn(2+)</name>
        <dbReference type="ChEBI" id="CHEBI:29035"/>
    </cofactor>
</comment>
<comment type="cofactor">
    <cofactor evidence="1">
        <name>thiamine diphosphate</name>
        <dbReference type="ChEBI" id="CHEBI:58937"/>
    </cofactor>
    <text evidence="1">Binds 1 thiamine pyrophosphate per subunit.</text>
</comment>
<comment type="pathway">
    <text evidence="1">Quinol/quinone metabolism; 1,4-dihydroxy-2-naphthoate biosynthesis; 1,4-dihydroxy-2-naphthoate from chorismate: step 2/7.</text>
</comment>
<comment type="pathway">
    <text evidence="1">Quinol/quinone metabolism; menaquinone biosynthesis.</text>
</comment>
<comment type="subunit">
    <text evidence="1">Homodimer.</text>
</comment>
<comment type="similarity">
    <text evidence="1">Belongs to the TPP enzyme family. MenD subfamily.</text>
</comment>
<accession>A1R996</accession>
<name>MEND_PAEAT</name>
<organism>
    <name type="scientific">Paenarthrobacter aurescens (strain TC1)</name>
    <dbReference type="NCBI Taxonomy" id="290340"/>
    <lineage>
        <taxon>Bacteria</taxon>
        <taxon>Bacillati</taxon>
        <taxon>Actinomycetota</taxon>
        <taxon>Actinomycetes</taxon>
        <taxon>Micrococcales</taxon>
        <taxon>Micrococcaceae</taxon>
        <taxon>Paenarthrobacter</taxon>
    </lineage>
</organism>